<keyword id="KW-0119">Carbohydrate metabolism</keyword>
<keyword id="KW-0963">Cytoplasm</keyword>
<keyword id="KW-0413">Isomerase</keyword>
<keyword id="KW-0684">Rhamnose metabolism</keyword>
<organism>
    <name type="scientific">Escherichia coli O7:K1 (strain IAI39 / ExPEC)</name>
    <dbReference type="NCBI Taxonomy" id="585057"/>
    <lineage>
        <taxon>Bacteria</taxon>
        <taxon>Pseudomonadati</taxon>
        <taxon>Pseudomonadota</taxon>
        <taxon>Gammaproteobacteria</taxon>
        <taxon>Enterobacterales</taxon>
        <taxon>Enterobacteriaceae</taxon>
        <taxon>Escherichia</taxon>
    </lineage>
</organism>
<reference key="1">
    <citation type="journal article" date="2009" name="PLoS Genet.">
        <title>Organised genome dynamics in the Escherichia coli species results in highly diverse adaptive paths.</title>
        <authorList>
            <person name="Touchon M."/>
            <person name="Hoede C."/>
            <person name="Tenaillon O."/>
            <person name="Barbe V."/>
            <person name="Baeriswyl S."/>
            <person name="Bidet P."/>
            <person name="Bingen E."/>
            <person name="Bonacorsi S."/>
            <person name="Bouchier C."/>
            <person name="Bouvet O."/>
            <person name="Calteau A."/>
            <person name="Chiapello H."/>
            <person name="Clermont O."/>
            <person name="Cruveiller S."/>
            <person name="Danchin A."/>
            <person name="Diard M."/>
            <person name="Dossat C."/>
            <person name="Karoui M.E."/>
            <person name="Frapy E."/>
            <person name="Garry L."/>
            <person name="Ghigo J.M."/>
            <person name="Gilles A.M."/>
            <person name="Johnson J."/>
            <person name="Le Bouguenec C."/>
            <person name="Lescat M."/>
            <person name="Mangenot S."/>
            <person name="Martinez-Jehanne V."/>
            <person name="Matic I."/>
            <person name="Nassif X."/>
            <person name="Oztas S."/>
            <person name="Petit M.A."/>
            <person name="Pichon C."/>
            <person name="Rouy Z."/>
            <person name="Ruf C.S."/>
            <person name="Schneider D."/>
            <person name="Tourret J."/>
            <person name="Vacherie B."/>
            <person name="Vallenet D."/>
            <person name="Medigue C."/>
            <person name="Rocha E.P.C."/>
            <person name="Denamur E."/>
        </authorList>
    </citation>
    <scope>NUCLEOTIDE SEQUENCE [LARGE SCALE GENOMIC DNA]</scope>
    <source>
        <strain>IAI39 / ExPEC</strain>
    </source>
</reference>
<name>RHAM_ECO7I</name>
<gene>
    <name evidence="1" type="primary">rhaM</name>
    <name type="ordered locus">ECIAI39_3096</name>
</gene>
<protein>
    <recommendedName>
        <fullName evidence="1">L-rhamnose mutarotase</fullName>
        <ecNumber evidence="1">5.1.3.32</ecNumber>
    </recommendedName>
    <alternativeName>
        <fullName evidence="1">Rhamnose 1-epimerase</fullName>
    </alternativeName>
    <alternativeName>
        <fullName evidence="1">Type-3 mutarotase</fullName>
    </alternativeName>
</protein>
<accession>B7NUA7</accession>
<dbReference type="EC" id="5.1.3.32" evidence="1"/>
<dbReference type="EMBL" id="CU928164">
    <property type="protein sequence ID" value="CAR19215.1"/>
    <property type="molecule type" value="Genomic_DNA"/>
</dbReference>
<dbReference type="RefSeq" id="WP_000619486.1">
    <property type="nucleotide sequence ID" value="NC_011750.1"/>
</dbReference>
<dbReference type="RefSeq" id="YP_002409026.1">
    <property type="nucleotide sequence ID" value="NC_011750.1"/>
</dbReference>
<dbReference type="SMR" id="B7NUA7"/>
<dbReference type="STRING" id="585057.ECIAI39_3096"/>
<dbReference type="KEGG" id="ect:ECIAI39_3096"/>
<dbReference type="PATRIC" id="fig|585057.6.peg.3211"/>
<dbReference type="HOGENOM" id="CLU_100689_2_0_6"/>
<dbReference type="UniPathway" id="UPA00125"/>
<dbReference type="Proteomes" id="UP000000749">
    <property type="component" value="Chromosome"/>
</dbReference>
<dbReference type="GO" id="GO:0005737">
    <property type="term" value="C:cytoplasm"/>
    <property type="evidence" value="ECO:0007669"/>
    <property type="project" value="UniProtKB-SubCell"/>
</dbReference>
<dbReference type="GO" id="GO:0062192">
    <property type="term" value="F:L-rhamnose mutarotase activity"/>
    <property type="evidence" value="ECO:0007669"/>
    <property type="project" value="UniProtKB-EC"/>
</dbReference>
<dbReference type="GO" id="GO:0019301">
    <property type="term" value="P:rhamnose catabolic process"/>
    <property type="evidence" value="ECO:0007669"/>
    <property type="project" value="TreeGrafter"/>
</dbReference>
<dbReference type="FunFam" id="3.30.70.100:FF:000013">
    <property type="entry name" value="L-rhamnose mutarotase"/>
    <property type="match status" value="1"/>
</dbReference>
<dbReference type="Gene3D" id="3.30.70.100">
    <property type="match status" value="1"/>
</dbReference>
<dbReference type="HAMAP" id="MF_01663">
    <property type="entry name" value="L_rham_rotase"/>
    <property type="match status" value="1"/>
</dbReference>
<dbReference type="InterPro" id="IPR011008">
    <property type="entry name" value="Dimeric_a/b-barrel"/>
</dbReference>
<dbReference type="InterPro" id="IPR013448">
    <property type="entry name" value="L-rhamnose_mutarotase"/>
</dbReference>
<dbReference type="InterPro" id="IPR008000">
    <property type="entry name" value="Rham/fucose_mutarotase"/>
</dbReference>
<dbReference type="NCBIfam" id="TIGR02625">
    <property type="entry name" value="YiiL_rotase"/>
    <property type="match status" value="1"/>
</dbReference>
<dbReference type="PANTHER" id="PTHR34389">
    <property type="entry name" value="L-RHAMNOSE MUTAROTASE"/>
    <property type="match status" value="1"/>
</dbReference>
<dbReference type="PANTHER" id="PTHR34389:SF2">
    <property type="entry name" value="L-RHAMNOSE MUTAROTASE"/>
    <property type="match status" value="1"/>
</dbReference>
<dbReference type="Pfam" id="PF05336">
    <property type="entry name" value="rhaM"/>
    <property type="match status" value="1"/>
</dbReference>
<dbReference type="SUPFAM" id="SSF54909">
    <property type="entry name" value="Dimeric alpha+beta barrel"/>
    <property type="match status" value="1"/>
</dbReference>
<sequence length="104" mass="12251">MIRKAFVMQVNPDAHEEYQRRHNPIWLELEAVLKSHGAHNYAIYLDKARNLLFATVEIESEERWNAVASTDVCQRWWKYMTDVMPANPDNSPVSSELQEVFYLP</sequence>
<feature type="chain" id="PRO_1000187217" description="L-rhamnose mutarotase">
    <location>
        <begin position="1"/>
        <end position="104"/>
    </location>
</feature>
<feature type="active site" description="Proton donor" evidence="1">
    <location>
        <position position="22"/>
    </location>
</feature>
<feature type="binding site" evidence="1">
    <location>
        <position position="18"/>
    </location>
    <ligand>
        <name>substrate</name>
    </ligand>
</feature>
<feature type="binding site" evidence="1">
    <location>
        <position position="41"/>
    </location>
    <ligand>
        <name>substrate</name>
    </ligand>
</feature>
<feature type="binding site" evidence="1">
    <location>
        <begin position="76"/>
        <end position="77"/>
    </location>
    <ligand>
        <name>substrate</name>
    </ligand>
</feature>
<evidence type="ECO:0000255" key="1">
    <source>
        <dbReference type="HAMAP-Rule" id="MF_01663"/>
    </source>
</evidence>
<proteinExistence type="inferred from homology"/>
<comment type="function">
    <text evidence="1">Involved in the anomeric conversion of L-rhamnose.</text>
</comment>
<comment type="catalytic activity">
    <reaction evidence="1">
        <text>alpha-L-rhamnose = beta-L-rhamnose</text>
        <dbReference type="Rhea" id="RHEA:25584"/>
        <dbReference type="ChEBI" id="CHEBI:27586"/>
        <dbReference type="ChEBI" id="CHEBI:27907"/>
        <dbReference type="EC" id="5.1.3.32"/>
    </reaction>
</comment>
<comment type="pathway">
    <text evidence="1">Carbohydrate metabolism; L-rhamnose metabolism.</text>
</comment>
<comment type="subunit">
    <text evidence="1">Homodimer.</text>
</comment>
<comment type="subcellular location">
    <subcellularLocation>
        <location evidence="1">Cytoplasm</location>
    </subcellularLocation>
</comment>
<comment type="similarity">
    <text evidence="1">Belongs to the rhamnose mutarotase family.</text>
</comment>